<accession>Q9H1M3</accession>
<accession>Q8NES7</accession>
<name>DB129_HUMAN</name>
<keyword id="KW-0044">Antibiotic</keyword>
<keyword id="KW-0929">Antimicrobial</keyword>
<keyword id="KW-0211">Defensin</keyword>
<keyword id="KW-1015">Disulfide bond</keyword>
<keyword id="KW-1267">Proteomics identification</keyword>
<keyword id="KW-1185">Reference proteome</keyword>
<keyword id="KW-0964">Secreted</keyword>
<keyword id="KW-0732">Signal</keyword>
<dbReference type="EMBL" id="AF529413">
    <property type="protein sequence ID" value="AAQ09522.1"/>
    <property type="molecule type" value="mRNA"/>
</dbReference>
<dbReference type="EMBL" id="AF525931">
    <property type="protein sequence ID" value="AAP47224.1"/>
    <property type="molecule type" value="mRNA"/>
</dbReference>
<dbReference type="EMBL" id="AY358186">
    <property type="protein sequence ID" value="AAQ88553.1"/>
    <property type="molecule type" value="mRNA"/>
</dbReference>
<dbReference type="EMBL" id="AL360078">
    <property type="status" value="NOT_ANNOTATED_CDS"/>
    <property type="molecule type" value="Genomic_DNA"/>
</dbReference>
<dbReference type="EMBL" id="BC070359">
    <property type="protein sequence ID" value="AAH70359.1"/>
    <property type="molecule type" value="mRNA"/>
</dbReference>
<dbReference type="EMBL" id="AY122480">
    <property type="protein sequence ID" value="AAM93921.1"/>
    <property type="molecule type" value="mRNA"/>
</dbReference>
<dbReference type="CCDS" id="CCDS12992.1"/>
<dbReference type="RefSeq" id="NP_543021.1">
    <property type="nucleotide sequence ID" value="NM_080831.4"/>
</dbReference>
<dbReference type="BioGRID" id="126749">
    <property type="interactions" value="3"/>
</dbReference>
<dbReference type="IntAct" id="Q9H1M3">
    <property type="interactions" value="2"/>
</dbReference>
<dbReference type="STRING" id="9606.ENSP00000246105"/>
<dbReference type="GlyGen" id="Q9H1M3">
    <property type="glycosylation" value="1 site"/>
</dbReference>
<dbReference type="BioMuta" id="DEFB129"/>
<dbReference type="DMDM" id="26392781"/>
<dbReference type="MassIVE" id="Q9H1M3"/>
<dbReference type="PaxDb" id="9606-ENSP00000246105"/>
<dbReference type="PeptideAtlas" id="Q9H1M3"/>
<dbReference type="ProteomicsDB" id="80429"/>
<dbReference type="Antibodypedia" id="22908">
    <property type="antibodies" value="48 antibodies from 16 providers"/>
</dbReference>
<dbReference type="DNASU" id="140881"/>
<dbReference type="Ensembl" id="ENST00000246105.4">
    <property type="protein sequence ID" value="ENSP00000246105.4"/>
    <property type="gene ID" value="ENSG00000125903.4"/>
</dbReference>
<dbReference type="GeneID" id="140881"/>
<dbReference type="KEGG" id="hsa:140881"/>
<dbReference type="MANE-Select" id="ENST00000246105.4">
    <property type="protein sequence ID" value="ENSP00000246105.4"/>
    <property type="RefSeq nucleotide sequence ID" value="NM_080831.4"/>
    <property type="RefSeq protein sequence ID" value="NP_543021.1"/>
</dbReference>
<dbReference type="UCSC" id="uc002wda.3">
    <property type="organism name" value="human"/>
</dbReference>
<dbReference type="AGR" id="HGNC:16218"/>
<dbReference type="CTD" id="140881"/>
<dbReference type="DisGeNET" id="140881"/>
<dbReference type="GeneCards" id="DEFB129"/>
<dbReference type="HGNC" id="HGNC:16218">
    <property type="gene designation" value="DEFB129"/>
</dbReference>
<dbReference type="HPA" id="ENSG00000125903">
    <property type="expression patterns" value="Tissue enriched (epididymis)"/>
</dbReference>
<dbReference type="neXtProt" id="NX_Q9H1M3"/>
<dbReference type="OpenTargets" id="ENSG00000125903"/>
<dbReference type="PharmGKB" id="PA27248"/>
<dbReference type="VEuPathDB" id="HostDB:ENSG00000125903"/>
<dbReference type="eggNOG" id="ENOG502TDUT">
    <property type="taxonomic scope" value="Eukaryota"/>
</dbReference>
<dbReference type="GeneTree" id="ENSGT00390000008616"/>
<dbReference type="HOGENOM" id="CLU_1618467_0_0_1"/>
<dbReference type="InParanoid" id="Q9H1M3"/>
<dbReference type="OMA" id="RRCLMGF"/>
<dbReference type="OrthoDB" id="9607806at2759"/>
<dbReference type="PAN-GO" id="Q9H1M3">
    <property type="GO annotations" value="0 GO annotations based on evolutionary models"/>
</dbReference>
<dbReference type="PhylomeDB" id="Q9H1M3"/>
<dbReference type="PathwayCommons" id="Q9H1M3"/>
<dbReference type="Reactome" id="R-HSA-1461957">
    <property type="pathway name" value="Beta defensins"/>
</dbReference>
<dbReference type="Reactome" id="R-HSA-1461973">
    <property type="pathway name" value="Defensins"/>
</dbReference>
<dbReference type="SignaLink" id="Q9H1M3"/>
<dbReference type="BioGRID-ORCS" id="140881">
    <property type="hits" value="123 hits in 1133 CRISPR screens"/>
</dbReference>
<dbReference type="GeneWiki" id="DEFB129"/>
<dbReference type="GenomeRNAi" id="140881"/>
<dbReference type="Pharos" id="Q9H1M3">
    <property type="development level" value="Tdark"/>
</dbReference>
<dbReference type="PRO" id="PR:Q9H1M3"/>
<dbReference type="Proteomes" id="UP000005640">
    <property type="component" value="Chromosome 20"/>
</dbReference>
<dbReference type="RNAct" id="Q9H1M3">
    <property type="molecule type" value="protein"/>
</dbReference>
<dbReference type="Bgee" id="ENSG00000125903">
    <property type="expression patterns" value="Expressed in corpus epididymis and 13 other cell types or tissues"/>
</dbReference>
<dbReference type="ExpressionAtlas" id="Q9H1M3">
    <property type="expression patterns" value="baseline and differential"/>
</dbReference>
<dbReference type="GO" id="GO:0005576">
    <property type="term" value="C:extracellular region"/>
    <property type="evidence" value="ECO:0007669"/>
    <property type="project" value="UniProtKB-SubCell"/>
</dbReference>
<dbReference type="GO" id="GO:0042742">
    <property type="term" value="P:defense response to bacterium"/>
    <property type="evidence" value="ECO:0007669"/>
    <property type="project" value="UniProtKB-KW"/>
</dbReference>
<gene>
    <name type="primary">DEFB129</name>
    <name type="synonym">C20orf87</name>
    <name type="synonym">DEFB29</name>
    <name type="ORF">UNQ5794/PRO19599</name>
</gene>
<proteinExistence type="evidence at protein level"/>
<reference key="1">
    <citation type="journal article" date="2003" name="Am. J. Respir. Cell Mol. Biol.">
        <title>ORFeome-based search of airway epithelial cell-specific novel human beta-defensin genes.</title>
        <authorList>
            <person name="Kao C.Y."/>
            <person name="Chen Y."/>
            <person name="Zhao Y.H."/>
            <person name="Wu R."/>
        </authorList>
    </citation>
    <scope>NUCLEOTIDE SEQUENCE [MRNA]</scope>
    <scope>TISSUE SPECIFICITY</scope>
</reference>
<reference key="2">
    <citation type="journal article" date="2003" name="Genomics">
        <title>Distribution of new human beta-defensin genes clustered on chromosome 20 in functionally different segments of epididymis.</title>
        <authorList>
            <person name="Rodriguez-Jimenez F.-J."/>
            <person name="Krause A."/>
            <person name="Schulz S."/>
            <person name="Forssmann W.-G."/>
            <person name="Conejo-Garcia J.-R."/>
            <person name="Schreeb R."/>
            <person name="Motzkus D."/>
        </authorList>
    </citation>
    <scope>NUCLEOTIDE SEQUENCE [MRNA]</scope>
    <source>
        <tissue>Testis</tissue>
    </source>
</reference>
<reference key="3">
    <citation type="journal article" date="2003" name="Genome Res.">
        <title>The secreted protein discovery initiative (SPDI), a large-scale effort to identify novel human secreted and transmembrane proteins: a bioinformatics assessment.</title>
        <authorList>
            <person name="Clark H.F."/>
            <person name="Gurney A.L."/>
            <person name="Abaya E."/>
            <person name="Baker K."/>
            <person name="Baldwin D.T."/>
            <person name="Brush J."/>
            <person name="Chen J."/>
            <person name="Chow B."/>
            <person name="Chui C."/>
            <person name="Crowley C."/>
            <person name="Currell B."/>
            <person name="Deuel B."/>
            <person name="Dowd P."/>
            <person name="Eaton D."/>
            <person name="Foster J.S."/>
            <person name="Grimaldi C."/>
            <person name="Gu Q."/>
            <person name="Hass P.E."/>
            <person name="Heldens S."/>
            <person name="Huang A."/>
            <person name="Kim H.S."/>
            <person name="Klimowski L."/>
            <person name="Jin Y."/>
            <person name="Johnson S."/>
            <person name="Lee J."/>
            <person name="Lewis L."/>
            <person name="Liao D."/>
            <person name="Mark M.R."/>
            <person name="Robbie E."/>
            <person name="Sanchez C."/>
            <person name="Schoenfeld J."/>
            <person name="Seshagiri S."/>
            <person name="Simmons L."/>
            <person name="Singh J."/>
            <person name="Smith V."/>
            <person name="Stinson J."/>
            <person name="Vagts A."/>
            <person name="Vandlen R.L."/>
            <person name="Watanabe C."/>
            <person name="Wieand D."/>
            <person name="Woods K."/>
            <person name="Xie M.-H."/>
            <person name="Yansura D.G."/>
            <person name="Yi S."/>
            <person name="Yu G."/>
            <person name="Yuan J."/>
            <person name="Zhang M."/>
            <person name="Zhang Z."/>
            <person name="Goddard A.D."/>
            <person name="Wood W.I."/>
            <person name="Godowski P.J."/>
            <person name="Gray A.M."/>
        </authorList>
    </citation>
    <scope>NUCLEOTIDE SEQUENCE [LARGE SCALE MRNA]</scope>
</reference>
<reference key="4">
    <citation type="journal article" date="2001" name="Nature">
        <title>The DNA sequence and comparative analysis of human chromosome 20.</title>
        <authorList>
            <person name="Deloukas P."/>
            <person name="Matthews L.H."/>
            <person name="Ashurst J.L."/>
            <person name="Burton J."/>
            <person name="Gilbert J.G.R."/>
            <person name="Jones M."/>
            <person name="Stavrides G."/>
            <person name="Almeida J.P."/>
            <person name="Babbage A.K."/>
            <person name="Bagguley C.L."/>
            <person name="Bailey J."/>
            <person name="Barlow K.F."/>
            <person name="Bates K.N."/>
            <person name="Beard L.M."/>
            <person name="Beare D.M."/>
            <person name="Beasley O.P."/>
            <person name="Bird C.P."/>
            <person name="Blakey S.E."/>
            <person name="Bridgeman A.M."/>
            <person name="Brown A.J."/>
            <person name="Buck D."/>
            <person name="Burrill W.D."/>
            <person name="Butler A.P."/>
            <person name="Carder C."/>
            <person name="Carter N.P."/>
            <person name="Chapman J.C."/>
            <person name="Clamp M."/>
            <person name="Clark G."/>
            <person name="Clark L.N."/>
            <person name="Clark S.Y."/>
            <person name="Clee C.M."/>
            <person name="Clegg S."/>
            <person name="Cobley V.E."/>
            <person name="Collier R.E."/>
            <person name="Connor R.E."/>
            <person name="Corby N.R."/>
            <person name="Coulson A."/>
            <person name="Coville G.J."/>
            <person name="Deadman R."/>
            <person name="Dhami P.D."/>
            <person name="Dunn M."/>
            <person name="Ellington A.G."/>
            <person name="Frankland J.A."/>
            <person name="Fraser A."/>
            <person name="French L."/>
            <person name="Garner P."/>
            <person name="Grafham D.V."/>
            <person name="Griffiths C."/>
            <person name="Griffiths M.N.D."/>
            <person name="Gwilliam R."/>
            <person name="Hall R.E."/>
            <person name="Hammond S."/>
            <person name="Harley J.L."/>
            <person name="Heath P.D."/>
            <person name="Ho S."/>
            <person name="Holden J.L."/>
            <person name="Howden P.J."/>
            <person name="Huckle E."/>
            <person name="Hunt A.R."/>
            <person name="Hunt S.E."/>
            <person name="Jekosch K."/>
            <person name="Johnson C.M."/>
            <person name="Johnson D."/>
            <person name="Kay M.P."/>
            <person name="Kimberley A.M."/>
            <person name="King A."/>
            <person name="Knights A."/>
            <person name="Laird G.K."/>
            <person name="Lawlor S."/>
            <person name="Lehvaeslaiho M.H."/>
            <person name="Leversha M.A."/>
            <person name="Lloyd C."/>
            <person name="Lloyd D.M."/>
            <person name="Lovell J.D."/>
            <person name="Marsh V.L."/>
            <person name="Martin S.L."/>
            <person name="McConnachie L.J."/>
            <person name="McLay K."/>
            <person name="McMurray A.A."/>
            <person name="Milne S.A."/>
            <person name="Mistry D."/>
            <person name="Moore M.J.F."/>
            <person name="Mullikin J.C."/>
            <person name="Nickerson T."/>
            <person name="Oliver K."/>
            <person name="Parker A."/>
            <person name="Patel R."/>
            <person name="Pearce T.A.V."/>
            <person name="Peck A.I."/>
            <person name="Phillimore B.J.C.T."/>
            <person name="Prathalingam S.R."/>
            <person name="Plumb R.W."/>
            <person name="Ramsay H."/>
            <person name="Rice C.M."/>
            <person name="Ross M.T."/>
            <person name="Scott C.E."/>
            <person name="Sehra H.K."/>
            <person name="Shownkeen R."/>
            <person name="Sims S."/>
            <person name="Skuce C.D."/>
            <person name="Smith M.L."/>
            <person name="Soderlund C."/>
            <person name="Steward C.A."/>
            <person name="Sulston J.E."/>
            <person name="Swann R.M."/>
            <person name="Sycamore N."/>
            <person name="Taylor R."/>
            <person name="Tee L."/>
            <person name="Thomas D.W."/>
            <person name="Thorpe A."/>
            <person name="Tracey A."/>
            <person name="Tromans A.C."/>
            <person name="Vaudin M."/>
            <person name="Wall M."/>
            <person name="Wallis J.M."/>
            <person name="Whitehead S.L."/>
            <person name="Whittaker P."/>
            <person name="Willey D.L."/>
            <person name="Williams L."/>
            <person name="Williams S.A."/>
            <person name="Wilming L."/>
            <person name="Wray P.W."/>
            <person name="Hubbard T."/>
            <person name="Durbin R.M."/>
            <person name="Bentley D.R."/>
            <person name="Beck S."/>
            <person name="Rogers J."/>
        </authorList>
    </citation>
    <scope>NUCLEOTIDE SEQUENCE [LARGE SCALE GENOMIC DNA]</scope>
</reference>
<reference key="5">
    <citation type="journal article" date="2004" name="Genome Res.">
        <title>The status, quality, and expansion of the NIH full-length cDNA project: the Mammalian Gene Collection (MGC).</title>
        <authorList>
            <consortium name="The MGC Project Team"/>
        </authorList>
    </citation>
    <scope>NUCLEOTIDE SEQUENCE [LARGE SCALE MRNA]</scope>
    <source>
        <tissue>Testis</tissue>
    </source>
</reference>
<reference key="6">
    <citation type="journal article" date="2002" name="Proc. Natl. Acad. Sci. U.S.A.">
        <title>Discovery of five conserved beta-defensin gene clusters using a computational search strategy.</title>
        <authorList>
            <person name="Schutte B.C."/>
            <person name="Mitros J.P."/>
            <person name="Bartlett J.A."/>
            <person name="Walters J.D."/>
            <person name="Jia H.P."/>
            <person name="Welsh M.J."/>
            <person name="Casavant T.L."/>
            <person name="McCray P.B. Jr."/>
        </authorList>
    </citation>
    <scope>NUCLEOTIDE SEQUENCE [MRNA] OF 1-155</scope>
    <source>
        <tissue>Testis</tissue>
    </source>
</reference>
<evidence type="ECO:0000250" key="1"/>
<evidence type="ECO:0000255" key="2"/>
<evidence type="ECO:0000256" key="3">
    <source>
        <dbReference type="SAM" id="MobiDB-lite"/>
    </source>
</evidence>
<evidence type="ECO:0000269" key="4">
    <source>
    </source>
</evidence>
<evidence type="ECO:0000305" key="5"/>
<feature type="signal peptide" evidence="2">
    <location>
        <begin position="1"/>
        <end position="19"/>
    </location>
</feature>
<feature type="chain" id="PRO_0000007005" description="Beta-defensin 129">
    <location>
        <begin position="20"/>
        <end position="183"/>
    </location>
</feature>
<feature type="region of interest" description="Disordered" evidence="3">
    <location>
        <begin position="141"/>
        <end position="183"/>
    </location>
</feature>
<feature type="compositionally biased region" description="Pro residues" evidence="3">
    <location>
        <begin position="159"/>
        <end position="170"/>
    </location>
</feature>
<feature type="disulfide bond" evidence="1">
    <location>
        <begin position="27"/>
        <end position="53"/>
    </location>
</feature>
<feature type="disulfide bond" evidence="1">
    <location>
        <begin position="34"/>
        <end position="48"/>
    </location>
</feature>
<feature type="disulfide bond" evidence="1">
    <location>
        <begin position="38"/>
        <end position="54"/>
    </location>
</feature>
<feature type="sequence variant" id="VAR_024327" description="In dbSNP:rs1053783.">
    <original>T</original>
    <variation>S</variation>
    <location>
        <position position="149"/>
    </location>
</feature>
<organism>
    <name type="scientific">Homo sapiens</name>
    <name type="common">Human</name>
    <dbReference type="NCBI Taxonomy" id="9606"/>
    <lineage>
        <taxon>Eukaryota</taxon>
        <taxon>Metazoa</taxon>
        <taxon>Chordata</taxon>
        <taxon>Craniata</taxon>
        <taxon>Vertebrata</taxon>
        <taxon>Euteleostomi</taxon>
        <taxon>Mammalia</taxon>
        <taxon>Eutheria</taxon>
        <taxon>Euarchontoglires</taxon>
        <taxon>Primates</taxon>
        <taxon>Haplorrhini</taxon>
        <taxon>Catarrhini</taxon>
        <taxon>Hominidae</taxon>
        <taxon>Homo</taxon>
    </lineage>
</organism>
<sequence length="183" mass="20299">MKLLFPIFASLMLQYQVNTEFIGLRRCLMGLGRCRDHCNVDEKEIQKCKMKKCCVGPKVVKLIKNYLQYGTPNVLNEDVQEMLKPAKNSSAVIQRKHILSVLPQIKSTSFFANTNFVIIPNATPMNSATISTMTPGQITYTATSTKSNTKESRDSATASPPPAPPPPNILPTPSLELEEAEEQ</sequence>
<comment type="function">
    <text evidence="5">Has antibacterial activity.</text>
</comment>
<comment type="interaction">
    <interactant intactId="EBI-23712762">
        <id>Q9H1M3</id>
    </interactant>
    <interactant intactId="EBI-11603430">
        <id>Q6PL24</id>
        <label>TMED8</label>
    </interactant>
    <organismsDiffer>false</organismsDiffer>
    <experiments>3</experiments>
</comment>
<comment type="subcellular location">
    <subcellularLocation>
        <location evidence="5">Secreted</location>
    </subcellularLocation>
</comment>
<comment type="tissue specificity">
    <text evidence="4">Expressed specifically in testis.</text>
</comment>
<comment type="similarity">
    <text evidence="5">Belongs to the beta-defensin family.</text>
</comment>
<protein>
    <recommendedName>
        <fullName>Beta-defensin 129</fullName>
    </recommendedName>
    <alternativeName>
        <fullName>Beta-defensin 29</fullName>
        <shortName>DEFB-29</shortName>
    </alternativeName>
    <alternativeName>
        <fullName>Defensin, beta 129</fullName>
    </alternativeName>
</protein>